<reference key="1">
    <citation type="journal article" date="2001" name="J. Bacteriol.">
        <title>Genome of the bacterium Streptococcus pneumoniae strain R6.</title>
        <authorList>
            <person name="Hoskins J."/>
            <person name="Alborn W.E. Jr."/>
            <person name="Arnold J."/>
            <person name="Blaszczak L.C."/>
            <person name="Burgett S."/>
            <person name="DeHoff B.S."/>
            <person name="Estrem S.T."/>
            <person name="Fritz L."/>
            <person name="Fu D.-J."/>
            <person name="Fuller W."/>
            <person name="Geringer C."/>
            <person name="Gilmour R."/>
            <person name="Glass J.S."/>
            <person name="Khoja H."/>
            <person name="Kraft A.R."/>
            <person name="Lagace R.E."/>
            <person name="LeBlanc D.J."/>
            <person name="Lee L.N."/>
            <person name="Lefkowitz E.J."/>
            <person name="Lu J."/>
            <person name="Matsushima P."/>
            <person name="McAhren S.M."/>
            <person name="McHenney M."/>
            <person name="McLeaster K."/>
            <person name="Mundy C.W."/>
            <person name="Nicas T.I."/>
            <person name="Norris F.H."/>
            <person name="O'Gara M."/>
            <person name="Peery R.B."/>
            <person name="Robertson G.T."/>
            <person name="Rockey P."/>
            <person name="Sun P.-M."/>
            <person name="Winkler M.E."/>
            <person name="Yang Y."/>
            <person name="Young-Bellido M."/>
            <person name="Zhao G."/>
            <person name="Zook C.A."/>
            <person name="Baltz R.H."/>
            <person name="Jaskunas S.R."/>
            <person name="Rosteck P.R. Jr."/>
            <person name="Skatrud P.L."/>
            <person name="Glass J.I."/>
        </authorList>
    </citation>
    <scope>NUCLEOTIDE SEQUENCE [LARGE SCALE GENOMIC DNA]</scope>
    <source>
        <strain>ATCC BAA-255 / R6</strain>
    </source>
</reference>
<accession>Q8CWV6</accession>
<sequence>MNLYDVIKKPVITESSMAQLEAGKYVFEVDTRAHKLLIKQAVEAAFEGVKVANVNTINVKPKAKRVGRYTGFTNKTKKAIITLTADSKAIELFAAEAE</sequence>
<name>RL23_STRR6</name>
<evidence type="ECO:0000255" key="1">
    <source>
        <dbReference type="HAMAP-Rule" id="MF_01369"/>
    </source>
</evidence>
<evidence type="ECO:0000305" key="2"/>
<organism>
    <name type="scientific">Streptococcus pneumoniae (strain ATCC BAA-255 / R6)</name>
    <dbReference type="NCBI Taxonomy" id="171101"/>
    <lineage>
        <taxon>Bacteria</taxon>
        <taxon>Bacillati</taxon>
        <taxon>Bacillota</taxon>
        <taxon>Bacilli</taxon>
        <taxon>Lactobacillales</taxon>
        <taxon>Streptococcaceae</taxon>
        <taxon>Streptococcus</taxon>
    </lineage>
</organism>
<comment type="function">
    <text evidence="1">One of the early assembly proteins it binds 23S rRNA. One of the proteins that surrounds the polypeptide exit tunnel on the outside of the ribosome. Forms the main docking site for trigger factor binding to the ribosome.</text>
</comment>
<comment type="subunit">
    <text evidence="1">Part of the 50S ribosomal subunit. Contacts protein L29, and trigger factor when it is bound to the ribosome.</text>
</comment>
<comment type="similarity">
    <text evidence="1">Belongs to the universal ribosomal protein uL23 family.</text>
</comment>
<keyword id="KW-1185">Reference proteome</keyword>
<keyword id="KW-0687">Ribonucleoprotein</keyword>
<keyword id="KW-0689">Ribosomal protein</keyword>
<keyword id="KW-0694">RNA-binding</keyword>
<keyword id="KW-0699">rRNA-binding</keyword>
<feature type="chain" id="PRO_1000068173" description="Large ribosomal subunit protein uL23">
    <location>
        <begin position="1"/>
        <end position="98"/>
    </location>
</feature>
<dbReference type="EMBL" id="AE007317">
    <property type="protein sequence ID" value="AAK98994.1"/>
    <property type="molecule type" value="Genomic_DNA"/>
</dbReference>
<dbReference type="PIR" id="F95024">
    <property type="entry name" value="F95024"/>
</dbReference>
<dbReference type="PIR" id="F97895">
    <property type="entry name" value="F97895"/>
</dbReference>
<dbReference type="RefSeq" id="NP_357784.1">
    <property type="nucleotide sequence ID" value="NC_003098.1"/>
</dbReference>
<dbReference type="RefSeq" id="WP_001055347.1">
    <property type="nucleotide sequence ID" value="NC_003098.1"/>
</dbReference>
<dbReference type="SMR" id="Q8CWV6"/>
<dbReference type="STRING" id="171101.spr0190"/>
<dbReference type="KEGG" id="spr:spr0190"/>
<dbReference type="PATRIC" id="fig|171101.6.peg.222"/>
<dbReference type="eggNOG" id="COG0089">
    <property type="taxonomic scope" value="Bacteria"/>
</dbReference>
<dbReference type="HOGENOM" id="CLU_037562_3_2_9"/>
<dbReference type="PRO" id="PR:Q8CWV6"/>
<dbReference type="Proteomes" id="UP000000586">
    <property type="component" value="Chromosome"/>
</dbReference>
<dbReference type="GO" id="GO:0022625">
    <property type="term" value="C:cytosolic large ribosomal subunit"/>
    <property type="evidence" value="ECO:0000318"/>
    <property type="project" value="GO_Central"/>
</dbReference>
<dbReference type="GO" id="GO:0019843">
    <property type="term" value="F:rRNA binding"/>
    <property type="evidence" value="ECO:0007669"/>
    <property type="project" value="UniProtKB-UniRule"/>
</dbReference>
<dbReference type="GO" id="GO:0003735">
    <property type="term" value="F:structural constituent of ribosome"/>
    <property type="evidence" value="ECO:0000318"/>
    <property type="project" value="GO_Central"/>
</dbReference>
<dbReference type="GO" id="GO:0006412">
    <property type="term" value="P:translation"/>
    <property type="evidence" value="ECO:0007669"/>
    <property type="project" value="UniProtKB-UniRule"/>
</dbReference>
<dbReference type="FunFam" id="3.30.70.330:FF:000001">
    <property type="entry name" value="50S ribosomal protein L23"/>
    <property type="match status" value="1"/>
</dbReference>
<dbReference type="Gene3D" id="3.30.70.330">
    <property type="match status" value="1"/>
</dbReference>
<dbReference type="HAMAP" id="MF_01369_B">
    <property type="entry name" value="Ribosomal_uL23_B"/>
    <property type="match status" value="1"/>
</dbReference>
<dbReference type="InterPro" id="IPR012677">
    <property type="entry name" value="Nucleotide-bd_a/b_plait_sf"/>
</dbReference>
<dbReference type="InterPro" id="IPR013025">
    <property type="entry name" value="Ribosomal_uL23-like"/>
</dbReference>
<dbReference type="InterPro" id="IPR012678">
    <property type="entry name" value="Ribosomal_uL23/eL15/eS24_sf"/>
</dbReference>
<dbReference type="InterPro" id="IPR001014">
    <property type="entry name" value="Ribosomal_uL23_CS"/>
</dbReference>
<dbReference type="NCBIfam" id="NF004361">
    <property type="entry name" value="PRK05738.2-1"/>
    <property type="match status" value="1"/>
</dbReference>
<dbReference type="NCBIfam" id="NF004363">
    <property type="entry name" value="PRK05738.2-4"/>
    <property type="match status" value="1"/>
</dbReference>
<dbReference type="PANTHER" id="PTHR11620">
    <property type="entry name" value="60S RIBOSOMAL PROTEIN L23A"/>
    <property type="match status" value="1"/>
</dbReference>
<dbReference type="Pfam" id="PF00276">
    <property type="entry name" value="Ribosomal_L23"/>
    <property type="match status" value="1"/>
</dbReference>
<dbReference type="SUPFAM" id="SSF54189">
    <property type="entry name" value="Ribosomal proteins S24e, L23 and L15e"/>
    <property type="match status" value="1"/>
</dbReference>
<dbReference type="PROSITE" id="PS00050">
    <property type="entry name" value="RIBOSOMAL_L23"/>
    <property type="match status" value="1"/>
</dbReference>
<gene>
    <name evidence="1" type="primary">rplW</name>
    <name type="ordered locus">spr0190</name>
</gene>
<proteinExistence type="inferred from homology"/>
<protein>
    <recommendedName>
        <fullName evidence="1">Large ribosomal subunit protein uL23</fullName>
    </recommendedName>
    <alternativeName>
        <fullName evidence="2">50S ribosomal protein L23</fullName>
    </alternativeName>
</protein>